<sequence>MCSSVAAKLWFLTDRRIREDYPQKEILRALKAKCCEEELDFRAVVMDEVVLTIEQGNLGLRINGELITAYPQVVVVRVPTPWVQSDSDITVLRHLEKMGCRLMNRPQAILNCVNKFWTFQELAGHGVPLPDTFSYGGHENFAKMIDEAEVLEFPMVVKNTRGHRGKAVFLARDKHHLADLSHLIRHEAPYLFQKYVKESHGRDVRVIVVGGRVVGTMLRCSTDGRMQSNCSLGGVGMMCSLSEQGKQLAIQVSNILGMDVCGIDLLMKDDGSFCVCEANANVGFIAFDKACNLDVAGIIADYAASLLPSGRLTRRMSLLSVVSTASETSEPELGPPASTAVDNMSASSSSVDSDPESTERELLTKLPGGLFNMNQLLANEIKLLVD</sequence>
<reference key="1">
    <citation type="journal article" date="1999" name="DNA Res.">
        <title>Prediction of the coding sequences of unidentified human genes. XV. The complete sequences of 100 new cDNA clones from brain which code for large proteins in vitro.</title>
        <authorList>
            <person name="Nagase T."/>
            <person name="Ishikawa K."/>
            <person name="Kikuno R."/>
            <person name="Hirosawa M."/>
            <person name="Nomura N."/>
            <person name="Ohara O."/>
        </authorList>
    </citation>
    <scope>NUCLEOTIDE SEQUENCE [LARGE SCALE MRNA] (ISOFORM 1)</scope>
    <source>
        <tissue>Brain</tissue>
    </source>
</reference>
<reference key="2">
    <citation type="journal article" date="2004" name="Nat. Genet.">
        <title>Complete sequencing and characterization of 21,243 full-length human cDNAs.</title>
        <authorList>
            <person name="Ota T."/>
            <person name="Suzuki Y."/>
            <person name="Nishikawa T."/>
            <person name="Otsuki T."/>
            <person name="Sugiyama T."/>
            <person name="Irie R."/>
            <person name="Wakamatsu A."/>
            <person name="Hayashi K."/>
            <person name="Sato H."/>
            <person name="Nagai K."/>
            <person name="Kimura K."/>
            <person name="Makita H."/>
            <person name="Sekine M."/>
            <person name="Obayashi M."/>
            <person name="Nishi T."/>
            <person name="Shibahara T."/>
            <person name="Tanaka T."/>
            <person name="Ishii S."/>
            <person name="Yamamoto J."/>
            <person name="Saito K."/>
            <person name="Kawai Y."/>
            <person name="Isono Y."/>
            <person name="Nakamura Y."/>
            <person name="Nagahari K."/>
            <person name="Murakami K."/>
            <person name="Yasuda T."/>
            <person name="Iwayanagi T."/>
            <person name="Wagatsuma M."/>
            <person name="Shiratori A."/>
            <person name="Sudo H."/>
            <person name="Hosoiri T."/>
            <person name="Kaku Y."/>
            <person name="Kodaira H."/>
            <person name="Kondo H."/>
            <person name="Sugawara M."/>
            <person name="Takahashi M."/>
            <person name="Kanda K."/>
            <person name="Yokoi T."/>
            <person name="Furuya T."/>
            <person name="Kikkawa E."/>
            <person name="Omura Y."/>
            <person name="Abe K."/>
            <person name="Kamihara K."/>
            <person name="Katsuta N."/>
            <person name="Sato K."/>
            <person name="Tanikawa M."/>
            <person name="Yamazaki M."/>
            <person name="Ninomiya K."/>
            <person name="Ishibashi T."/>
            <person name="Yamashita H."/>
            <person name="Murakawa K."/>
            <person name="Fujimori K."/>
            <person name="Tanai H."/>
            <person name="Kimata M."/>
            <person name="Watanabe M."/>
            <person name="Hiraoka S."/>
            <person name="Chiba Y."/>
            <person name="Ishida S."/>
            <person name="Ono Y."/>
            <person name="Takiguchi S."/>
            <person name="Watanabe S."/>
            <person name="Yosida M."/>
            <person name="Hotuta T."/>
            <person name="Kusano J."/>
            <person name="Kanehori K."/>
            <person name="Takahashi-Fujii A."/>
            <person name="Hara H."/>
            <person name="Tanase T.-O."/>
            <person name="Nomura Y."/>
            <person name="Togiya S."/>
            <person name="Komai F."/>
            <person name="Hara R."/>
            <person name="Takeuchi K."/>
            <person name="Arita M."/>
            <person name="Imose N."/>
            <person name="Musashino K."/>
            <person name="Yuuki H."/>
            <person name="Oshima A."/>
            <person name="Sasaki N."/>
            <person name="Aotsuka S."/>
            <person name="Yoshikawa Y."/>
            <person name="Matsunawa H."/>
            <person name="Ichihara T."/>
            <person name="Shiohata N."/>
            <person name="Sano S."/>
            <person name="Moriya S."/>
            <person name="Momiyama H."/>
            <person name="Satoh N."/>
            <person name="Takami S."/>
            <person name="Terashima Y."/>
            <person name="Suzuki O."/>
            <person name="Nakagawa S."/>
            <person name="Senoh A."/>
            <person name="Mizoguchi H."/>
            <person name="Goto Y."/>
            <person name="Shimizu F."/>
            <person name="Wakebe H."/>
            <person name="Hishigaki H."/>
            <person name="Watanabe T."/>
            <person name="Sugiyama A."/>
            <person name="Takemoto M."/>
            <person name="Kawakami B."/>
            <person name="Yamazaki M."/>
            <person name="Watanabe K."/>
            <person name="Kumagai A."/>
            <person name="Itakura S."/>
            <person name="Fukuzumi Y."/>
            <person name="Fujimori Y."/>
            <person name="Komiyama M."/>
            <person name="Tashiro H."/>
            <person name="Tanigami A."/>
            <person name="Fujiwara T."/>
            <person name="Ono T."/>
            <person name="Yamada K."/>
            <person name="Fujii Y."/>
            <person name="Ozaki K."/>
            <person name="Hirao M."/>
            <person name="Ohmori Y."/>
            <person name="Kawabata A."/>
            <person name="Hikiji T."/>
            <person name="Kobatake N."/>
            <person name="Inagaki H."/>
            <person name="Ikema Y."/>
            <person name="Okamoto S."/>
            <person name="Okitani R."/>
            <person name="Kawakami T."/>
            <person name="Noguchi S."/>
            <person name="Itoh T."/>
            <person name="Shigeta K."/>
            <person name="Senba T."/>
            <person name="Matsumura K."/>
            <person name="Nakajima Y."/>
            <person name="Mizuno T."/>
            <person name="Morinaga M."/>
            <person name="Sasaki M."/>
            <person name="Togashi T."/>
            <person name="Oyama M."/>
            <person name="Hata H."/>
            <person name="Watanabe M."/>
            <person name="Komatsu T."/>
            <person name="Mizushima-Sugano J."/>
            <person name="Satoh T."/>
            <person name="Shirai Y."/>
            <person name="Takahashi Y."/>
            <person name="Nakagawa K."/>
            <person name="Okumura K."/>
            <person name="Nagase T."/>
            <person name="Nomura N."/>
            <person name="Kikuchi H."/>
            <person name="Masuho Y."/>
            <person name="Yamashita R."/>
            <person name="Nakai K."/>
            <person name="Yada T."/>
            <person name="Nakamura Y."/>
            <person name="Ohara O."/>
            <person name="Isogai T."/>
            <person name="Sugano S."/>
        </authorList>
    </citation>
    <scope>NUCLEOTIDE SEQUENCE [LARGE SCALE MRNA] (ISOFORM 1)</scope>
    <source>
        <tissue>Testis</tissue>
    </source>
</reference>
<reference key="3">
    <citation type="submission" date="2005-09" db="EMBL/GenBank/DDBJ databases">
        <authorList>
            <person name="Mural R.J."/>
            <person name="Istrail S."/>
            <person name="Sutton G.G."/>
            <person name="Florea L."/>
            <person name="Halpern A.L."/>
            <person name="Mobarry C.M."/>
            <person name="Lippert R."/>
            <person name="Walenz B."/>
            <person name="Shatkay H."/>
            <person name="Dew I."/>
            <person name="Miller J.R."/>
            <person name="Flanigan M.J."/>
            <person name="Edwards N.J."/>
            <person name="Bolanos R."/>
            <person name="Fasulo D."/>
            <person name="Halldorsson B.V."/>
            <person name="Hannenhalli S."/>
            <person name="Turner R."/>
            <person name="Yooseph S."/>
            <person name="Lu F."/>
            <person name="Nusskern D.R."/>
            <person name="Shue B.C."/>
            <person name="Zheng X.H."/>
            <person name="Zhong F."/>
            <person name="Delcher A.L."/>
            <person name="Huson D.H."/>
            <person name="Kravitz S.A."/>
            <person name="Mouchard L."/>
            <person name="Reinert K."/>
            <person name="Remington K.A."/>
            <person name="Clark A.G."/>
            <person name="Waterman M.S."/>
            <person name="Eichler E.E."/>
            <person name="Adams M.D."/>
            <person name="Hunkapiller M.W."/>
            <person name="Myers E.W."/>
            <person name="Venter J.C."/>
        </authorList>
    </citation>
    <scope>NUCLEOTIDE SEQUENCE [LARGE SCALE GENOMIC DNA]</scope>
</reference>
<reference key="4">
    <citation type="journal article" date="2004" name="Genome Res.">
        <title>The status, quality, and expansion of the NIH full-length cDNA project: the Mammalian Gene Collection (MGC).</title>
        <authorList>
            <consortium name="The MGC Project Team"/>
        </authorList>
    </citation>
    <scope>NUCLEOTIDE SEQUENCE [LARGE SCALE MRNA] (ISOFORM 2)</scope>
    <scope>NUCLEOTIDE SEQUENCE [LARGE SCALE MRNA] OF 151-386 (ISOFORM 1)</scope>
    <source>
        <tissue>Cervix</tissue>
        <tissue>Ovary</tissue>
    </source>
</reference>
<protein>
    <recommendedName>
        <fullName>Beta-citrylglutamate synthase B</fullName>
        <ecNumber evidence="2">6.3.1.17</ecNumber>
    </recommendedName>
    <alternativeName>
        <fullName>N-acetyl-aspartylglutamate synthetase B</fullName>
        <shortName>NAAG synthetase B</shortName>
        <shortName>NAAGS</shortName>
        <ecNumber evidence="2">6.3.2.41</ecNumber>
    </alternativeName>
    <alternativeName>
        <fullName>Ribosomal protein S6 modification-like protein B</fullName>
    </alternativeName>
</protein>
<name>RIMKB_HUMAN</name>
<evidence type="ECO:0000250" key="1"/>
<evidence type="ECO:0000250" key="2">
    <source>
        <dbReference type="UniProtKB" id="Q80WS1"/>
    </source>
</evidence>
<evidence type="ECO:0000255" key="3">
    <source>
        <dbReference type="PROSITE-ProRule" id="PRU00409"/>
    </source>
</evidence>
<evidence type="ECO:0000256" key="4">
    <source>
        <dbReference type="SAM" id="MobiDB-lite"/>
    </source>
</evidence>
<evidence type="ECO:0000303" key="5">
    <source>
    </source>
</evidence>
<evidence type="ECO:0000305" key="6"/>
<dbReference type="EC" id="6.3.1.17" evidence="2"/>
<dbReference type="EC" id="6.3.2.41" evidence="2"/>
<dbReference type="EMBL" id="AB033064">
    <property type="protein sequence ID" value="BAA86552.1"/>
    <property type="status" value="ALT_INIT"/>
    <property type="molecule type" value="mRNA"/>
</dbReference>
<dbReference type="EMBL" id="AK302847">
    <property type="protein sequence ID" value="BAH13820.1"/>
    <property type="molecule type" value="mRNA"/>
</dbReference>
<dbReference type="EMBL" id="CH471116">
    <property type="protein sequence ID" value="EAW88610.1"/>
    <property type="molecule type" value="Genomic_DNA"/>
</dbReference>
<dbReference type="EMBL" id="CH471116">
    <property type="protein sequence ID" value="EAW88611.1"/>
    <property type="molecule type" value="Genomic_DNA"/>
</dbReference>
<dbReference type="EMBL" id="BC021977">
    <property type="protein sequence ID" value="AAH21977.2"/>
    <property type="molecule type" value="mRNA"/>
</dbReference>
<dbReference type="EMBL" id="BC033793">
    <property type="protein sequence ID" value="AAH33793.1"/>
    <property type="molecule type" value="mRNA"/>
</dbReference>
<dbReference type="CCDS" id="CCDS41748.1">
    <molecule id="Q9ULI2-1"/>
</dbReference>
<dbReference type="RefSeq" id="NP_001284705.1">
    <molecule id="Q9ULI2-1"/>
    <property type="nucleotide sequence ID" value="NM_001297776.2"/>
</dbReference>
<dbReference type="RefSeq" id="NP_001339196.1">
    <molecule id="Q9ULI2-1"/>
    <property type="nucleotide sequence ID" value="NM_001352267.2"/>
</dbReference>
<dbReference type="RefSeq" id="NP_001339197.1">
    <molecule id="Q9ULI2-1"/>
    <property type="nucleotide sequence ID" value="NM_001352268.2"/>
</dbReference>
<dbReference type="RefSeq" id="NP_001339198.1">
    <molecule id="Q9ULI2-1"/>
    <property type="nucleotide sequence ID" value="NM_001352269.2"/>
</dbReference>
<dbReference type="RefSeq" id="NP_001339199.1">
    <molecule id="Q9ULI2-1"/>
    <property type="nucleotide sequence ID" value="NM_001352270.2"/>
</dbReference>
<dbReference type="RefSeq" id="NP_001339200.1">
    <molecule id="Q9ULI2-1"/>
    <property type="nucleotide sequence ID" value="NM_001352271.2"/>
</dbReference>
<dbReference type="RefSeq" id="NP_065785.2">
    <molecule id="Q9ULI2-1"/>
    <property type="nucleotide sequence ID" value="NM_020734.5"/>
</dbReference>
<dbReference type="RefSeq" id="XP_006719181.1">
    <property type="nucleotide sequence ID" value="XM_006719118.2"/>
</dbReference>
<dbReference type="RefSeq" id="XP_006719190.1">
    <property type="nucleotide sequence ID" value="XM_006719127.2"/>
</dbReference>
<dbReference type="RefSeq" id="XP_011519078.1">
    <property type="nucleotide sequence ID" value="XM_011520776.1"/>
</dbReference>
<dbReference type="RefSeq" id="XP_011519079.1">
    <property type="nucleotide sequence ID" value="XM_011520777.1"/>
</dbReference>
<dbReference type="RefSeq" id="XP_011519080.1">
    <property type="nucleotide sequence ID" value="XM_011520778.2"/>
</dbReference>
<dbReference type="RefSeq" id="XP_011519081.1">
    <property type="nucleotide sequence ID" value="XM_011520779.2"/>
</dbReference>
<dbReference type="RefSeq" id="XP_011519082.1">
    <property type="nucleotide sequence ID" value="XM_011520780.1"/>
</dbReference>
<dbReference type="RefSeq" id="XP_011519085.1">
    <property type="nucleotide sequence ID" value="XM_011520783.1"/>
</dbReference>
<dbReference type="RefSeq" id="XP_011519092.1">
    <property type="nucleotide sequence ID" value="XM_011520790.1"/>
</dbReference>
<dbReference type="RefSeq" id="XP_016875166.1">
    <property type="nucleotide sequence ID" value="XM_017019677.1"/>
</dbReference>
<dbReference type="RefSeq" id="XP_016875167.1">
    <property type="nucleotide sequence ID" value="XM_017019678.1"/>
</dbReference>
<dbReference type="RefSeq" id="XP_016875168.1">
    <property type="nucleotide sequence ID" value="XM_017019679.1"/>
</dbReference>
<dbReference type="RefSeq" id="XP_016875169.1">
    <property type="nucleotide sequence ID" value="XM_017019680.1"/>
</dbReference>
<dbReference type="RefSeq" id="XP_016875171.1">
    <property type="nucleotide sequence ID" value="XM_017019682.1"/>
</dbReference>
<dbReference type="RefSeq" id="XP_016875172.1">
    <property type="nucleotide sequence ID" value="XM_017019683.1"/>
</dbReference>
<dbReference type="RefSeq" id="XP_016875173.1">
    <molecule id="Q9ULI2-1"/>
    <property type="nucleotide sequence ID" value="XM_017019684.2"/>
</dbReference>
<dbReference type="RefSeq" id="XP_016875174.1">
    <property type="nucleotide sequence ID" value="XM_017019685.1"/>
</dbReference>
<dbReference type="RefSeq" id="XP_016875175.1">
    <molecule id="Q9ULI2-1"/>
    <property type="nucleotide sequence ID" value="XM_017019686.2"/>
</dbReference>
<dbReference type="RefSeq" id="XP_016875176.1">
    <molecule id="Q9ULI2-1"/>
    <property type="nucleotide sequence ID" value="XM_017019687.2"/>
</dbReference>
<dbReference type="RefSeq" id="XP_016875177.1">
    <property type="nucleotide sequence ID" value="XM_017019688.1"/>
</dbReference>
<dbReference type="RefSeq" id="XP_016875178.1">
    <property type="nucleotide sequence ID" value="XM_017019689.1"/>
</dbReference>
<dbReference type="RefSeq" id="XP_016875179.1">
    <property type="nucleotide sequence ID" value="XM_017019690.1"/>
</dbReference>
<dbReference type="RefSeq" id="XP_016875180.1">
    <property type="nucleotide sequence ID" value="XM_017019691.1"/>
</dbReference>
<dbReference type="RefSeq" id="XP_016875181.1">
    <property type="nucleotide sequence ID" value="XM_017019692.1"/>
</dbReference>
<dbReference type="RefSeq" id="XP_016875182.1">
    <property type="nucleotide sequence ID" value="XM_017019693.1"/>
</dbReference>
<dbReference type="RefSeq" id="XP_016875183.1">
    <property type="nucleotide sequence ID" value="XM_017019694.1"/>
</dbReference>
<dbReference type="RefSeq" id="XP_016875184.1">
    <property type="nucleotide sequence ID" value="XM_017019695.1"/>
</dbReference>
<dbReference type="RefSeq" id="XP_016875185.1">
    <property type="nucleotide sequence ID" value="XM_017019696.1"/>
</dbReference>
<dbReference type="RefSeq" id="XP_016875186.1">
    <property type="nucleotide sequence ID" value="XM_017019697.1"/>
</dbReference>
<dbReference type="RefSeq" id="XP_024304854.1">
    <molecule id="Q9ULI2-1"/>
    <property type="nucleotide sequence ID" value="XM_024449086.2"/>
</dbReference>
<dbReference type="RefSeq" id="XP_024304855.1">
    <molecule id="Q9ULI2-1"/>
    <property type="nucleotide sequence ID" value="XM_024449087.2"/>
</dbReference>
<dbReference type="RefSeq" id="XP_024304857.1">
    <molecule id="Q9ULI2-1"/>
    <property type="nucleotide sequence ID" value="XM_024449089.2"/>
</dbReference>
<dbReference type="RefSeq" id="XP_024304858.1">
    <molecule id="Q9ULI2-1"/>
    <property type="nucleotide sequence ID" value="XM_024449090.2"/>
</dbReference>
<dbReference type="RefSeq" id="XP_024304859.1">
    <molecule id="Q9ULI2-1"/>
    <property type="nucleotide sequence ID" value="XM_024449091.2"/>
</dbReference>
<dbReference type="RefSeq" id="XP_024304860.1">
    <molecule id="Q9ULI2-2"/>
    <property type="nucleotide sequence ID" value="XM_024449092.2"/>
</dbReference>
<dbReference type="RefSeq" id="XP_024304862.1">
    <molecule id="Q9ULI2-2"/>
    <property type="nucleotide sequence ID" value="XM_024449094.2"/>
</dbReference>
<dbReference type="RefSeq" id="XP_047285136.1">
    <molecule id="Q9ULI2-1"/>
    <property type="nucleotide sequence ID" value="XM_047429180.1"/>
</dbReference>
<dbReference type="RefSeq" id="XP_047285137.1">
    <molecule id="Q9ULI2-1"/>
    <property type="nucleotide sequence ID" value="XM_047429181.1"/>
</dbReference>
<dbReference type="RefSeq" id="XP_047285138.1">
    <molecule id="Q9ULI2-2"/>
    <property type="nucleotide sequence ID" value="XM_047429182.1"/>
</dbReference>
<dbReference type="RefSeq" id="XP_047285139.1">
    <molecule id="Q9ULI2-2"/>
    <property type="nucleotide sequence ID" value="XM_047429183.1"/>
</dbReference>
<dbReference type="RefSeq" id="XP_047285140.1">
    <molecule id="Q9ULI2-2"/>
    <property type="nucleotide sequence ID" value="XM_047429184.1"/>
</dbReference>
<dbReference type="RefSeq" id="XP_047285141.1">
    <molecule id="Q9ULI2-1"/>
    <property type="nucleotide sequence ID" value="XM_047429185.1"/>
</dbReference>
<dbReference type="RefSeq" id="XP_047285142.1">
    <molecule id="Q9ULI2-1"/>
    <property type="nucleotide sequence ID" value="XM_047429186.1"/>
</dbReference>
<dbReference type="RefSeq" id="XP_047285143.1">
    <molecule id="Q9ULI2-1"/>
    <property type="nucleotide sequence ID" value="XM_047429187.1"/>
</dbReference>
<dbReference type="RefSeq" id="XP_047285144.1">
    <molecule id="Q9ULI2-1"/>
    <property type="nucleotide sequence ID" value="XM_047429188.1"/>
</dbReference>
<dbReference type="RefSeq" id="XP_047285145.1">
    <molecule id="Q9ULI2-1"/>
    <property type="nucleotide sequence ID" value="XM_047429189.1"/>
</dbReference>
<dbReference type="RefSeq" id="XP_047285146.1">
    <molecule id="Q9ULI2-1"/>
    <property type="nucleotide sequence ID" value="XM_047429190.1"/>
</dbReference>
<dbReference type="RefSeq" id="XP_047285147.1">
    <molecule id="Q9ULI2-1"/>
    <property type="nucleotide sequence ID" value="XM_047429191.1"/>
</dbReference>
<dbReference type="RefSeq" id="XP_047285148.1">
    <molecule id="Q9ULI2-1"/>
    <property type="nucleotide sequence ID" value="XM_047429192.1"/>
</dbReference>
<dbReference type="RefSeq" id="XP_047285149.1">
    <molecule id="Q9ULI2-2"/>
    <property type="nucleotide sequence ID" value="XM_047429193.1"/>
</dbReference>
<dbReference type="RefSeq" id="XP_047285150.1">
    <molecule id="Q9ULI2-2"/>
    <property type="nucleotide sequence ID" value="XM_047429194.1"/>
</dbReference>
<dbReference type="RefSeq" id="XP_047285151.1">
    <molecule id="Q9ULI2-2"/>
    <property type="nucleotide sequence ID" value="XM_047429195.1"/>
</dbReference>
<dbReference type="RefSeq" id="XP_047285152.1">
    <molecule id="Q9ULI2-2"/>
    <property type="nucleotide sequence ID" value="XM_047429196.1"/>
</dbReference>
<dbReference type="RefSeq" id="XP_047285153.1">
    <molecule id="Q9ULI2-2"/>
    <property type="nucleotide sequence ID" value="XM_047429197.1"/>
</dbReference>
<dbReference type="RefSeq" id="XP_054228590.1">
    <molecule id="Q9ULI2-1"/>
    <property type="nucleotide sequence ID" value="XM_054372615.1"/>
</dbReference>
<dbReference type="RefSeq" id="XP_054228591.1">
    <molecule id="Q9ULI2-1"/>
    <property type="nucleotide sequence ID" value="XM_054372616.1"/>
</dbReference>
<dbReference type="RefSeq" id="XP_054228592.1">
    <molecule id="Q9ULI2-1"/>
    <property type="nucleotide sequence ID" value="XM_054372617.1"/>
</dbReference>
<dbReference type="RefSeq" id="XP_054228593.1">
    <molecule id="Q9ULI2-1"/>
    <property type="nucleotide sequence ID" value="XM_054372618.1"/>
</dbReference>
<dbReference type="RefSeq" id="XP_054228594.1">
    <molecule id="Q9ULI2-1"/>
    <property type="nucleotide sequence ID" value="XM_054372619.1"/>
</dbReference>
<dbReference type="RefSeq" id="XP_054228595.1">
    <molecule id="Q9ULI2-1"/>
    <property type="nucleotide sequence ID" value="XM_054372620.1"/>
</dbReference>
<dbReference type="RefSeq" id="XP_054228596.1">
    <molecule id="Q9ULI2-1"/>
    <property type="nucleotide sequence ID" value="XM_054372621.1"/>
</dbReference>
<dbReference type="RefSeq" id="XP_054228597.1">
    <molecule id="Q9ULI2-2"/>
    <property type="nucleotide sequence ID" value="XM_054372622.1"/>
</dbReference>
<dbReference type="RefSeq" id="XP_054228598.1">
    <molecule id="Q9ULI2-2"/>
    <property type="nucleotide sequence ID" value="XM_054372623.1"/>
</dbReference>
<dbReference type="RefSeq" id="XP_054228599.1">
    <molecule id="Q9ULI2-2"/>
    <property type="nucleotide sequence ID" value="XM_054372624.1"/>
</dbReference>
<dbReference type="RefSeq" id="XP_054228600.1">
    <molecule id="Q9ULI2-2"/>
    <property type="nucleotide sequence ID" value="XM_054372625.1"/>
</dbReference>
<dbReference type="RefSeq" id="XP_054228602.1">
    <molecule id="Q9ULI2-1"/>
    <property type="nucleotide sequence ID" value="XM_054372627.1"/>
</dbReference>
<dbReference type="RefSeq" id="XP_054228603.1">
    <molecule id="Q9ULI2-1"/>
    <property type="nucleotide sequence ID" value="XM_054372628.1"/>
</dbReference>
<dbReference type="RefSeq" id="XP_054228604.1">
    <molecule id="Q9ULI2-1"/>
    <property type="nucleotide sequence ID" value="XM_054372629.1"/>
</dbReference>
<dbReference type="RefSeq" id="XP_054228605.1">
    <molecule id="Q9ULI2-1"/>
    <property type="nucleotide sequence ID" value="XM_054372630.1"/>
</dbReference>
<dbReference type="RefSeq" id="XP_054228606.1">
    <molecule id="Q9ULI2-1"/>
    <property type="nucleotide sequence ID" value="XM_054372631.1"/>
</dbReference>
<dbReference type="RefSeq" id="XP_054228607.1">
    <molecule id="Q9ULI2-1"/>
    <property type="nucleotide sequence ID" value="XM_054372632.1"/>
</dbReference>
<dbReference type="RefSeq" id="XP_054228608.1">
    <molecule id="Q9ULI2-1"/>
    <property type="nucleotide sequence ID" value="XM_054372633.1"/>
</dbReference>
<dbReference type="RefSeq" id="XP_054228609.1">
    <molecule id="Q9ULI2-1"/>
    <property type="nucleotide sequence ID" value="XM_054372634.1"/>
</dbReference>
<dbReference type="RefSeq" id="XP_054228610.1">
    <molecule id="Q9ULI2-1"/>
    <property type="nucleotide sequence ID" value="XM_054372635.1"/>
</dbReference>
<dbReference type="RefSeq" id="XP_054228611.1">
    <molecule id="Q9ULI2-1"/>
    <property type="nucleotide sequence ID" value="XM_054372636.1"/>
</dbReference>
<dbReference type="RefSeq" id="XP_054228612.1">
    <molecule id="Q9ULI2-2"/>
    <property type="nucleotide sequence ID" value="XM_054372637.1"/>
</dbReference>
<dbReference type="RefSeq" id="XP_054228613.1">
    <molecule id="Q9ULI2-2"/>
    <property type="nucleotide sequence ID" value="XM_054372638.1"/>
</dbReference>
<dbReference type="RefSeq" id="XP_054228614.1">
    <molecule id="Q9ULI2-2"/>
    <property type="nucleotide sequence ID" value="XM_054372639.1"/>
</dbReference>
<dbReference type="RefSeq" id="XP_054228615.1">
    <molecule id="Q9ULI2-2"/>
    <property type="nucleotide sequence ID" value="XM_054372640.1"/>
</dbReference>
<dbReference type="RefSeq" id="XP_054228616.1">
    <molecule id="Q9ULI2-2"/>
    <property type="nucleotide sequence ID" value="XM_054372641.1"/>
</dbReference>
<dbReference type="RefSeq" id="XP_054228617.1">
    <molecule id="Q9ULI2-2"/>
    <property type="nucleotide sequence ID" value="XM_054372642.1"/>
</dbReference>
<dbReference type="RefSeq" id="XP_054228618.1">
    <molecule id="Q9ULI2-1"/>
    <property type="nucleotide sequence ID" value="XM_054372643.1"/>
</dbReference>
<dbReference type="SMR" id="Q9ULI2"/>
<dbReference type="BioGRID" id="121561">
    <property type="interactions" value="12"/>
</dbReference>
<dbReference type="FunCoup" id="Q9ULI2">
    <property type="interactions" value="492"/>
</dbReference>
<dbReference type="IntAct" id="Q9ULI2">
    <property type="interactions" value="3"/>
</dbReference>
<dbReference type="STRING" id="9606.ENSP00000350136"/>
<dbReference type="iPTMnet" id="Q9ULI2"/>
<dbReference type="PhosphoSitePlus" id="Q9ULI2"/>
<dbReference type="BioMuta" id="RIMKLB"/>
<dbReference type="DMDM" id="143458798"/>
<dbReference type="jPOST" id="Q9ULI2"/>
<dbReference type="MassIVE" id="Q9ULI2"/>
<dbReference type="PaxDb" id="9606-ENSP00000350136"/>
<dbReference type="PeptideAtlas" id="Q9ULI2"/>
<dbReference type="ProteomicsDB" id="85035">
    <molecule id="Q9ULI2-1"/>
</dbReference>
<dbReference type="ProteomicsDB" id="85036">
    <molecule id="Q9ULI2-2"/>
</dbReference>
<dbReference type="Pumba" id="Q9ULI2"/>
<dbReference type="Antibodypedia" id="23082">
    <property type="antibodies" value="73 antibodies from 22 providers"/>
</dbReference>
<dbReference type="DNASU" id="57494"/>
<dbReference type="Ensembl" id="ENST00000357529.7">
    <molecule id="Q9ULI2-1"/>
    <property type="protein sequence ID" value="ENSP00000350136.3"/>
    <property type="gene ID" value="ENSG00000166532.16"/>
</dbReference>
<dbReference type="Ensembl" id="ENST00000535829.6">
    <molecule id="Q9ULI2-1"/>
    <property type="protein sequence ID" value="ENSP00000445863.1"/>
    <property type="gene ID" value="ENSG00000166532.16"/>
</dbReference>
<dbReference type="Ensembl" id="ENST00000538135.5">
    <molecule id="Q9ULI2-1"/>
    <property type="protein sequence ID" value="ENSP00000440943.1"/>
    <property type="gene ID" value="ENSG00000166532.16"/>
</dbReference>
<dbReference type="Ensembl" id="ENST00000544257.5">
    <molecule id="Q9ULI2-2"/>
    <property type="protein sequence ID" value="ENSP00000438004.1"/>
    <property type="gene ID" value="ENSG00000166532.16"/>
</dbReference>
<dbReference type="Ensembl" id="ENST00000619374.4">
    <molecule id="Q9ULI2-2"/>
    <property type="protein sequence ID" value="ENSP00000483871.1"/>
    <property type="gene ID" value="ENSG00000166532.16"/>
</dbReference>
<dbReference type="GeneID" id="57494"/>
<dbReference type="KEGG" id="hsa:57494"/>
<dbReference type="MANE-Select" id="ENST00000535829.6">
    <property type="protein sequence ID" value="ENSP00000445863.1"/>
    <property type="RefSeq nucleotide sequence ID" value="NM_001297776.2"/>
    <property type="RefSeq protein sequence ID" value="NP_001284705.1"/>
</dbReference>
<dbReference type="UCSC" id="uc001qux.2">
    <molecule id="Q9ULI2-1"/>
    <property type="organism name" value="human"/>
</dbReference>
<dbReference type="AGR" id="HGNC:29228"/>
<dbReference type="CTD" id="57494"/>
<dbReference type="DisGeNET" id="57494"/>
<dbReference type="GeneCards" id="RIMKLB"/>
<dbReference type="HGNC" id="HGNC:29228">
    <property type="gene designation" value="RIMKLB"/>
</dbReference>
<dbReference type="HPA" id="ENSG00000166532">
    <property type="expression patterns" value="Low tissue specificity"/>
</dbReference>
<dbReference type="MIM" id="614054">
    <property type="type" value="gene"/>
</dbReference>
<dbReference type="neXtProt" id="NX_Q9ULI2"/>
<dbReference type="OpenTargets" id="ENSG00000166532"/>
<dbReference type="PharmGKB" id="PA164725354"/>
<dbReference type="VEuPathDB" id="HostDB:ENSG00000166532"/>
<dbReference type="eggNOG" id="ENOG502QT4M">
    <property type="taxonomic scope" value="Eukaryota"/>
</dbReference>
<dbReference type="GeneTree" id="ENSGT00390000014577"/>
<dbReference type="HOGENOM" id="CLU_054353_3_0_1"/>
<dbReference type="InParanoid" id="Q9ULI2"/>
<dbReference type="OMA" id="DAAYNFN"/>
<dbReference type="OrthoDB" id="10265738at2759"/>
<dbReference type="PAN-GO" id="Q9ULI2">
    <property type="GO annotations" value="2 GO annotations based on evolutionary models"/>
</dbReference>
<dbReference type="PhylomeDB" id="Q9ULI2"/>
<dbReference type="TreeFam" id="TF332035"/>
<dbReference type="PathwayCommons" id="Q9ULI2"/>
<dbReference type="Reactome" id="R-HSA-8964539">
    <property type="pathway name" value="Glutamate and glutamine metabolism"/>
</dbReference>
<dbReference type="SignaLink" id="Q9ULI2"/>
<dbReference type="BioGRID-ORCS" id="57494">
    <property type="hits" value="22 hits in 1151 CRISPR screens"/>
</dbReference>
<dbReference type="ChiTaRS" id="RIMKLB">
    <property type="organism name" value="human"/>
</dbReference>
<dbReference type="GenomeRNAi" id="57494"/>
<dbReference type="Pharos" id="Q9ULI2">
    <property type="development level" value="Tbio"/>
</dbReference>
<dbReference type="PRO" id="PR:Q9ULI2"/>
<dbReference type="Proteomes" id="UP000005640">
    <property type="component" value="Chromosome 12"/>
</dbReference>
<dbReference type="RNAct" id="Q9ULI2">
    <property type="molecule type" value="protein"/>
</dbReference>
<dbReference type="Bgee" id="ENSG00000166532">
    <property type="expression patterns" value="Expressed in oviduct epithelium and 177 other cell types or tissues"/>
</dbReference>
<dbReference type="ExpressionAtlas" id="Q9ULI2">
    <property type="expression patterns" value="baseline and differential"/>
</dbReference>
<dbReference type="GO" id="GO:0005737">
    <property type="term" value="C:cytoplasm"/>
    <property type="evidence" value="ECO:0000250"/>
    <property type="project" value="UniProtKB"/>
</dbReference>
<dbReference type="GO" id="GO:0005829">
    <property type="term" value="C:cytosol"/>
    <property type="evidence" value="ECO:0000304"/>
    <property type="project" value="Reactome"/>
</dbReference>
<dbReference type="GO" id="GO:0005524">
    <property type="term" value="F:ATP binding"/>
    <property type="evidence" value="ECO:0007669"/>
    <property type="project" value="UniProtKB-KW"/>
</dbReference>
<dbReference type="GO" id="GO:0072591">
    <property type="term" value="F:citrate-L-glutamate ligase activity"/>
    <property type="evidence" value="ECO:0000250"/>
    <property type="project" value="UniProtKB"/>
</dbReference>
<dbReference type="GO" id="GO:0046872">
    <property type="term" value="F:metal ion binding"/>
    <property type="evidence" value="ECO:0007669"/>
    <property type="project" value="UniProtKB-KW"/>
</dbReference>
<dbReference type="GO" id="GO:0072590">
    <property type="term" value="F:N-acetyl-L-aspartate-L-glutamate ligase activity"/>
    <property type="evidence" value="ECO:0000250"/>
    <property type="project" value="UniProtKB"/>
</dbReference>
<dbReference type="GO" id="GO:0009064">
    <property type="term" value="P:glutamine family amino acid metabolic process"/>
    <property type="evidence" value="ECO:0000304"/>
    <property type="project" value="Reactome"/>
</dbReference>
<dbReference type="GO" id="GO:0036211">
    <property type="term" value="P:protein modification process"/>
    <property type="evidence" value="ECO:0007669"/>
    <property type="project" value="InterPro"/>
</dbReference>
<dbReference type="FunFam" id="3.30.1490.20:FF:000011">
    <property type="entry name" value="beta-citrylglutamate synthase B isoform X1"/>
    <property type="match status" value="1"/>
</dbReference>
<dbReference type="FunFam" id="3.30.470.20:FF:000022">
    <property type="entry name" value="beta-citrylglutamate synthase B isoform X1"/>
    <property type="match status" value="1"/>
</dbReference>
<dbReference type="FunFam" id="3.40.50.20:FF:000014">
    <property type="entry name" value="beta-citrylglutamate synthase B isoform X1"/>
    <property type="match status" value="1"/>
</dbReference>
<dbReference type="Gene3D" id="3.40.50.20">
    <property type="match status" value="1"/>
</dbReference>
<dbReference type="Gene3D" id="3.30.1490.20">
    <property type="entry name" value="ATP-grasp fold, A domain"/>
    <property type="match status" value="1"/>
</dbReference>
<dbReference type="Gene3D" id="3.30.470.20">
    <property type="entry name" value="ATP-grasp fold, B domain"/>
    <property type="match status" value="1"/>
</dbReference>
<dbReference type="InterPro" id="IPR011761">
    <property type="entry name" value="ATP-grasp"/>
</dbReference>
<dbReference type="InterPro" id="IPR013651">
    <property type="entry name" value="ATP-grasp_RimK-type"/>
</dbReference>
<dbReference type="InterPro" id="IPR013815">
    <property type="entry name" value="ATP_grasp_subdomain_1"/>
</dbReference>
<dbReference type="InterPro" id="IPR004666">
    <property type="entry name" value="Rp_bS6_RimK/Lys_biosynth_LsyX"/>
</dbReference>
<dbReference type="NCBIfam" id="TIGR00768">
    <property type="entry name" value="rimK_fam"/>
    <property type="match status" value="1"/>
</dbReference>
<dbReference type="PANTHER" id="PTHR21621:SF5">
    <property type="entry name" value="BETA-CITRYLGLUTAMATE SYNTHASE B"/>
    <property type="match status" value="1"/>
</dbReference>
<dbReference type="PANTHER" id="PTHR21621">
    <property type="entry name" value="RIBOSOMAL PROTEIN S6 MODIFICATION PROTEIN"/>
    <property type="match status" value="1"/>
</dbReference>
<dbReference type="Pfam" id="PF08443">
    <property type="entry name" value="RimK"/>
    <property type="match status" value="1"/>
</dbReference>
<dbReference type="SUPFAM" id="SSF56059">
    <property type="entry name" value="Glutathione synthetase ATP-binding domain-like"/>
    <property type="match status" value="1"/>
</dbReference>
<dbReference type="PROSITE" id="PS50975">
    <property type="entry name" value="ATP_GRASP"/>
    <property type="match status" value="1"/>
</dbReference>
<accession>Q9ULI2</accession>
<accession>B7Z834</accession>
<accession>D3DUV2</accession>
<accession>Q8N4P4</accession>
<accession>Q8WTW6</accession>
<comment type="function">
    <text evidence="2">Catalyzes the synthesis of beta-citryl-L-glutamate and N-acetyl-L-aspartyl-L-glutamate. Beta-citryl-L-glutamate is synthesized more efficiently than N-acetyl-L-aspartyl-L-glutamate.</text>
</comment>
<comment type="catalytic activity">
    <reaction evidence="2">
        <text>citrate + L-glutamate + ATP = beta-citrylglutamate + ADP + phosphate + H(+)</text>
        <dbReference type="Rhea" id="RHEA:40043"/>
        <dbReference type="ChEBI" id="CHEBI:15378"/>
        <dbReference type="ChEBI" id="CHEBI:16947"/>
        <dbReference type="ChEBI" id="CHEBI:29985"/>
        <dbReference type="ChEBI" id="CHEBI:30616"/>
        <dbReference type="ChEBI" id="CHEBI:43474"/>
        <dbReference type="ChEBI" id="CHEBI:76942"/>
        <dbReference type="ChEBI" id="CHEBI:456216"/>
        <dbReference type="EC" id="6.3.1.17"/>
    </reaction>
</comment>
<comment type="catalytic activity">
    <reaction evidence="2">
        <text>N-acetyl-L-aspartate + L-glutamate + ATP = N-acetyl-L-aspartyl-L-glutamate + ADP + phosphate + H(+)</text>
        <dbReference type="Rhea" id="RHEA:40035"/>
        <dbReference type="ChEBI" id="CHEBI:15378"/>
        <dbReference type="ChEBI" id="CHEBI:16953"/>
        <dbReference type="ChEBI" id="CHEBI:29985"/>
        <dbReference type="ChEBI" id="CHEBI:30616"/>
        <dbReference type="ChEBI" id="CHEBI:43474"/>
        <dbReference type="ChEBI" id="CHEBI:76931"/>
        <dbReference type="ChEBI" id="CHEBI:456216"/>
        <dbReference type="EC" id="6.3.2.41"/>
    </reaction>
</comment>
<comment type="cofactor">
    <cofactor evidence="1">
        <name>Mg(2+)</name>
        <dbReference type="ChEBI" id="CHEBI:18420"/>
    </cofactor>
    <cofactor evidence="1">
        <name>Mn(2+)</name>
        <dbReference type="ChEBI" id="CHEBI:29035"/>
    </cofactor>
    <text evidence="1">Binds 2 magnesium or manganese ions per subunit.</text>
</comment>
<comment type="subcellular location">
    <subcellularLocation>
        <location evidence="1">Cytoplasm</location>
    </subcellularLocation>
</comment>
<comment type="alternative products">
    <event type="alternative splicing"/>
    <isoform>
        <id>Q9ULI2-1</id>
        <name>1</name>
        <sequence type="displayed"/>
    </isoform>
    <isoform>
        <id>Q9ULI2-2</id>
        <name>2</name>
        <sequence type="described" ref="VSP_024198 VSP_024199"/>
    </isoform>
</comment>
<comment type="miscellaneous">
    <text evidence="2">N-acetyl-L-aspartyl-L-glutamate (NAAG) is the most abundant dipeptide present in vertebrate central nervous system (CNS). Beta-citryl-L-glutamate, a structural analog of NAAG, is present in testis and immature brain.</text>
</comment>
<comment type="miscellaneous">
    <molecule>Isoform 2</molecule>
    <text evidence="6">May be produced at very low levels due to a premature stop codon in the mRNA, leading to nonsense-mediated mRNA decay.</text>
</comment>
<comment type="similarity">
    <text evidence="6">Belongs to the RimK family.</text>
</comment>
<comment type="sequence caution" evidence="6">
    <conflict type="erroneous initiation">
        <sequence resource="EMBL-CDS" id="BAA86552"/>
    </conflict>
    <text>Extended N-terminus.</text>
</comment>
<gene>
    <name type="primary">RIMKLB</name>
    <name type="synonym">FAM80B</name>
    <name type="synonym">KIAA1238</name>
</gene>
<proteinExistence type="evidence at protein level"/>
<keyword id="KW-0025">Alternative splicing</keyword>
<keyword id="KW-0067">ATP-binding</keyword>
<keyword id="KW-0963">Cytoplasm</keyword>
<keyword id="KW-0436">Ligase</keyword>
<keyword id="KW-0460">Magnesium</keyword>
<keyword id="KW-0464">Manganese</keyword>
<keyword id="KW-0479">Metal-binding</keyword>
<keyword id="KW-0547">Nucleotide-binding</keyword>
<keyword id="KW-1267">Proteomics identification</keyword>
<keyword id="KW-1185">Reference proteome</keyword>
<feature type="chain" id="PRO_0000282571" description="Beta-citrylglutamate synthase B">
    <location>
        <begin position="1"/>
        <end position="386"/>
    </location>
</feature>
<feature type="domain" description="ATP-grasp" evidence="3">
    <location>
        <begin position="119"/>
        <end position="304"/>
    </location>
</feature>
<feature type="region of interest" description="Disordered" evidence="4">
    <location>
        <begin position="325"/>
        <end position="359"/>
    </location>
</feature>
<feature type="compositionally biased region" description="Low complexity" evidence="4">
    <location>
        <begin position="338"/>
        <end position="352"/>
    </location>
</feature>
<feature type="binding site" evidence="1">
    <location>
        <position position="158"/>
    </location>
    <ligand>
        <name>ATP</name>
        <dbReference type="ChEBI" id="CHEBI:30616"/>
    </ligand>
</feature>
<feature type="binding site" evidence="3">
    <location>
        <begin position="193"/>
        <end position="203"/>
    </location>
    <ligand>
        <name>ATP</name>
        <dbReference type="ChEBI" id="CHEBI:30616"/>
    </ligand>
</feature>
<feature type="binding site" evidence="1">
    <location>
        <position position="219"/>
    </location>
    <ligand>
        <name>ATP</name>
        <dbReference type="ChEBI" id="CHEBI:30616"/>
    </ligand>
</feature>
<feature type="binding site" evidence="3">
    <location>
        <position position="264"/>
    </location>
    <ligand>
        <name>Mg(2+)</name>
        <dbReference type="ChEBI" id="CHEBI:18420"/>
        <label>1</label>
    </ligand>
</feature>
<feature type="binding site" evidence="3">
    <location>
        <position position="264"/>
    </location>
    <ligand>
        <name>Mn(2+)</name>
        <dbReference type="ChEBI" id="CHEBI:29035"/>
        <label>1</label>
    </ligand>
</feature>
<feature type="binding site" evidence="3">
    <location>
        <position position="277"/>
    </location>
    <ligand>
        <name>Mg(2+)</name>
        <dbReference type="ChEBI" id="CHEBI:18420"/>
        <label>1</label>
    </ligand>
</feature>
<feature type="binding site" evidence="3">
    <location>
        <position position="277"/>
    </location>
    <ligand>
        <name>Mg(2+)</name>
        <dbReference type="ChEBI" id="CHEBI:18420"/>
        <label>2</label>
    </ligand>
</feature>
<feature type="binding site" evidence="3">
    <location>
        <position position="277"/>
    </location>
    <ligand>
        <name>Mn(2+)</name>
        <dbReference type="ChEBI" id="CHEBI:29035"/>
        <label>1</label>
    </ligand>
</feature>
<feature type="binding site" evidence="3">
    <location>
        <position position="277"/>
    </location>
    <ligand>
        <name>Mn(2+)</name>
        <dbReference type="ChEBI" id="CHEBI:29035"/>
        <label>2</label>
    </ligand>
</feature>
<feature type="binding site" evidence="3">
    <location>
        <position position="279"/>
    </location>
    <ligand>
        <name>Mg(2+)</name>
        <dbReference type="ChEBI" id="CHEBI:18420"/>
        <label>2</label>
    </ligand>
</feature>
<feature type="binding site" evidence="3">
    <location>
        <position position="279"/>
    </location>
    <ligand>
        <name>Mn(2+)</name>
        <dbReference type="ChEBI" id="CHEBI:29035"/>
        <label>2</label>
    </ligand>
</feature>
<feature type="splice variant" id="VSP_024198" description="In isoform 2." evidence="5">
    <original>VGFIAFDKACNLDVAGIIADYAASLL</original>
    <variation>PFQEPKKQIQTNKKIPREKTFLLPPS</variation>
    <location>
        <begin position="282"/>
        <end position="307"/>
    </location>
</feature>
<feature type="splice variant" id="VSP_024199" description="In isoform 2." evidence="5">
    <location>
        <begin position="308"/>
        <end position="386"/>
    </location>
</feature>
<organism>
    <name type="scientific">Homo sapiens</name>
    <name type="common">Human</name>
    <dbReference type="NCBI Taxonomy" id="9606"/>
    <lineage>
        <taxon>Eukaryota</taxon>
        <taxon>Metazoa</taxon>
        <taxon>Chordata</taxon>
        <taxon>Craniata</taxon>
        <taxon>Vertebrata</taxon>
        <taxon>Euteleostomi</taxon>
        <taxon>Mammalia</taxon>
        <taxon>Eutheria</taxon>
        <taxon>Euarchontoglires</taxon>
        <taxon>Primates</taxon>
        <taxon>Haplorrhini</taxon>
        <taxon>Catarrhini</taxon>
        <taxon>Hominidae</taxon>
        <taxon>Homo</taxon>
    </lineage>
</organism>